<protein>
    <recommendedName>
        <fullName evidence="1">Tetraacyldisaccharide 4'-kinase</fullName>
        <ecNumber evidence="1">2.7.1.130</ecNumber>
    </recommendedName>
    <alternativeName>
        <fullName evidence="1">Lipid A 4'-kinase</fullName>
    </alternativeName>
</protein>
<organism>
    <name type="scientific">Ectopseudomonas mendocina (strain ymp)</name>
    <name type="common">Pseudomonas mendocina</name>
    <dbReference type="NCBI Taxonomy" id="399739"/>
    <lineage>
        <taxon>Bacteria</taxon>
        <taxon>Pseudomonadati</taxon>
        <taxon>Pseudomonadota</taxon>
        <taxon>Gammaproteobacteria</taxon>
        <taxon>Pseudomonadales</taxon>
        <taxon>Pseudomonadaceae</taxon>
        <taxon>Ectopseudomonas</taxon>
    </lineage>
</organism>
<sequence>MSAADRLLEAWYRGHPALALLRPLEWLYRRVVQGKRARFLAGQGDIYRAPVPVLVVGNITVGGTGKTPLILFLIEHCRARGLKVGVVSRGYGATPPSLPWRVRADQSAAQAGDEPLLIVQRTGVPLMIDPDRSRAVRALLAEEPLDLILCDDGLQHYRLARDLELVLIDAARGLGNRRCLPAGPLREPAERLAEVDAVLSNGAETDSAEGYAFRLQPSALVNLVSGERLGLEHFPPGQAVHAVAGIGNPQRFFNTLEALNWRPVPHPFADHAQYDAAQLSFEPPLPLLMTEKDAVKCRAFAAADWWYLAVDAVPTPAFVDWLDKELARLIPGS</sequence>
<dbReference type="EC" id="2.7.1.130" evidence="1"/>
<dbReference type="EMBL" id="CP000680">
    <property type="protein sequence ID" value="ABP84378.1"/>
    <property type="molecule type" value="Genomic_DNA"/>
</dbReference>
<dbReference type="SMR" id="A4XSR2"/>
<dbReference type="STRING" id="399739.Pmen_1614"/>
<dbReference type="KEGG" id="pmy:Pmen_1614"/>
<dbReference type="PATRIC" id="fig|399739.8.peg.1636"/>
<dbReference type="eggNOG" id="COG1663">
    <property type="taxonomic scope" value="Bacteria"/>
</dbReference>
<dbReference type="HOGENOM" id="CLU_038816_2_0_6"/>
<dbReference type="OrthoDB" id="9766423at2"/>
<dbReference type="UniPathway" id="UPA00359">
    <property type="reaction ID" value="UER00482"/>
</dbReference>
<dbReference type="GO" id="GO:0005886">
    <property type="term" value="C:plasma membrane"/>
    <property type="evidence" value="ECO:0007669"/>
    <property type="project" value="TreeGrafter"/>
</dbReference>
<dbReference type="GO" id="GO:0005524">
    <property type="term" value="F:ATP binding"/>
    <property type="evidence" value="ECO:0007669"/>
    <property type="project" value="UniProtKB-UniRule"/>
</dbReference>
<dbReference type="GO" id="GO:0009029">
    <property type="term" value="F:tetraacyldisaccharide 4'-kinase activity"/>
    <property type="evidence" value="ECO:0007669"/>
    <property type="project" value="UniProtKB-UniRule"/>
</dbReference>
<dbReference type="GO" id="GO:0009245">
    <property type="term" value="P:lipid A biosynthetic process"/>
    <property type="evidence" value="ECO:0007669"/>
    <property type="project" value="UniProtKB-UniRule"/>
</dbReference>
<dbReference type="GO" id="GO:0009244">
    <property type="term" value="P:lipopolysaccharide core region biosynthetic process"/>
    <property type="evidence" value="ECO:0007669"/>
    <property type="project" value="TreeGrafter"/>
</dbReference>
<dbReference type="HAMAP" id="MF_00409">
    <property type="entry name" value="LpxK"/>
    <property type="match status" value="1"/>
</dbReference>
<dbReference type="InterPro" id="IPR003758">
    <property type="entry name" value="LpxK"/>
</dbReference>
<dbReference type="InterPro" id="IPR027417">
    <property type="entry name" value="P-loop_NTPase"/>
</dbReference>
<dbReference type="NCBIfam" id="TIGR00682">
    <property type="entry name" value="lpxK"/>
    <property type="match status" value="1"/>
</dbReference>
<dbReference type="PANTHER" id="PTHR42724">
    <property type="entry name" value="TETRAACYLDISACCHARIDE 4'-KINASE"/>
    <property type="match status" value="1"/>
</dbReference>
<dbReference type="PANTHER" id="PTHR42724:SF1">
    <property type="entry name" value="TETRAACYLDISACCHARIDE 4'-KINASE, MITOCHONDRIAL-RELATED"/>
    <property type="match status" value="1"/>
</dbReference>
<dbReference type="Pfam" id="PF02606">
    <property type="entry name" value="LpxK"/>
    <property type="match status" value="1"/>
</dbReference>
<dbReference type="SUPFAM" id="SSF52540">
    <property type="entry name" value="P-loop containing nucleoside triphosphate hydrolases"/>
    <property type="match status" value="1"/>
</dbReference>
<proteinExistence type="inferred from homology"/>
<gene>
    <name evidence="1" type="primary">lpxK</name>
    <name type="ordered locus">Pmen_1614</name>
</gene>
<accession>A4XSR2</accession>
<evidence type="ECO:0000255" key="1">
    <source>
        <dbReference type="HAMAP-Rule" id="MF_00409"/>
    </source>
</evidence>
<keyword id="KW-0067">ATP-binding</keyword>
<keyword id="KW-0418">Kinase</keyword>
<keyword id="KW-0441">Lipid A biosynthesis</keyword>
<keyword id="KW-0444">Lipid biosynthesis</keyword>
<keyword id="KW-0443">Lipid metabolism</keyword>
<keyword id="KW-0547">Nucleotide-binding</keyword>
<keyword id="KW-0808">Transferase</keyword>
<feature type="chain" id="PRO_0000340849" description="Tetraacyldisaccharide 4'-kinase">
    <location>
        <begin position="1"/>
        <end position="333"/>
    </location>
</feature>
<feature type="binding site" evidence="1">
    <location>
        <begin position="60"/>
        <end position="67"/>
    </location>
    <ligand>
        <name>ATP</name>
        <dbReference type="ChEBI" id="CHEBI:30616"/>
    </ligand>
</feature>
<reference key="1">
    <citation type="submission" date="2007-04" db="EMBL/GenBank/DDBJ databases">
        <title>Complete sequence of Pseudomonas mendocina ymp.</title>
        <authorList>
            <consortium name="US DOE Joint Genome Institute"/>
            <person name="Copeland A."/>
            <person name="Lucas S."/>
            <person name="Lapidus A."/>
            <person name="Barry K."/>
            <person name="Glavina del Rio T."/>
            <person name="Dalin E."/>
            <person name="Tice H."/>
            <person name="Pitluck S."/>
            <person name="Kiss H."/>
            <person name="Brettin T."/>
            <person name="Detter J.C."/>
            <person name="Bruce D."/>
            <person name="Han C."/>
            <person name="Schmutz J."/>
            <person name="Larimer F."/>
            <person name="Land M."/>
            <person name="Hauser L."/>
            <person name="Kyrpides N."/>
            <person name="Mikhailova N."/>
            <person name="Hersman L."/>
            <person name="Dubois J."/>
            <person name="Maurice P."/>
            <person name="Richardson P."/>
        </authorList>
    </citation>
    <scope>NUCLEOTIDE SEQUENCE [LARGE SCALE GENOMIC DNA]</scope>
    <source>
        <strain>ymp</strain>
    </source>
</reference>
<name>LPXK_ECTM1</name>
<comment type="function">
    <text evidence="1">Transfers the gamma-phosphate of ATP to the 4'-position of a tetraacyldisaccharide 1-phosphate intermediate (termed DS-1-P) to form tetraacyldisaccharide 1,4'-bis-phosphate (lipid IVA).</text>
</comment>
<comment type="catalytic activity">
    <reaction evidence="1">
        <text>a lipid A disaccharide + ATP = a lipid IVA + ADP + H(+)</text>
        <dbReference type="Rhea" id="RHEA:67840"/>
        <dbReference type="ChEBI" id="CHEBI:15378"/>
        <dbReference type="ChEBI" id="CHEBI:30616"/>
        <dbReference type="ChEBI" id="CHEBI:176343"/>
        <dbReference type="ChEBI" id="CHEBI:176425"/>
        <dbReference type="ChEBI" id="CHEBI:456216"/>
        <dbReference type="EC" id="2.7.1.130"/>
    </reaction>
</comment>
<comment type="pathway">
    <text evidence="1">Glycolipid biosynthesis; lipid IV(A) biosynthesis; lipid IV(A) from (3R)-3-hydroxytetradecanoyl-[acyl-carrier-protein] and UDP-N-acetyl-alpha-D-glucosamine: step 6/6.</text>
</comment>
<comment type="similarity">
    <text evidence="1">Belongs to the LpxK family.</text>
</comment>